<organism>
    <name type="scientific">Rattus norvegicus</name>
    <name type="common">Rat</name>
    <dbReference type="NCBI Taxonomy" id="10116"/>
    <lineage>
        <taxon>Eukaryota</taxon>
        <taxon>Metazoa</taxon>
        <taxon>Chordata</taxon>
        <taxon>Craniata</taxon>
        <taxon>Vertebrata</taxon>
        <taxon>Euteleostomi</taxon>
        <taxon>Mammalia</taxon>
        <taxon>Eutheria</taxon>
        <taxon>Euarchontoglires</taxon>
        <taxon>Glires</taxon>
        <taxon>Rodentia</taxon>
        <taxon>Myomorpha</taxon>
        <taxon>Muroidea</taxon>
        <taxon>Muridae</taxon>
        <taxon>Murinae</taxon>
        <taxon>Rattus</taxon>
    </lineage>
</organism>
<evidence type="ECO:0000255" key="1">
    <source>
        <dbReference type="PROSITE-ProRule" id="PRU00538"/>
    </source>
</evidence>
<evidence type="ECO:0000256" key="2">
    <source>
        <dbReference type="SAM" id="MobiDB-lite"/>
    </source>
</evidence>
<evidence type="ECO:0000269" key="3">
    <source>
    </source>
</evidence>
<evidence type="ECO:0000305" key="4"/>
<keyword id="KW-0963">Cytoplasm</keyword>
<keyword id="KW-1185">Reference proteome</keyword>
<accession>Q5BKC6</accession>
<accession>Q9R153</accession>
<gene>
    <name type="primary">Hspbap1</name>
    <name type="synonym">Pass1</name>
</gene>
<reference key="1">
    <citation type="journal article" date="2000" name="J. Biol. Chem.">
        <title>Identification and characterization of a novel protein from Sertoli cells, PASS1, that associates with mammalian small stress protein hsp27.</title>
        <authorList>
            <person name="Liu C."/>
            <person name="Gilmont R.R."/>
            <person name="Benndorf R."/>
            <person name="Welsh M.J."/>
        </authorList>
    </citation>
    <scope>NUCLEOTIDE SEQUENCE [MRNA]</scope>
    <scope>FUNCTION</scope>
    <scope>INTERACTION WITH CRYAB AND HSPB1</scope>
    <scope>TISSUE SPECIFICITY</scope>
    <scope>SUBCELLULAR LOCATION</scope>
    <source>
        <strain>Fischer</strain>
        <tissue>Sertoli cell</tissue>
    </source>
</reference>
<reference key="2">
    <citation type="journal article" date="2004" name="Genome Res.">
        <title>The status, quality, and expansion of the NIH full-length cDNA project: the Mammalian Gene Collection (MGC).</title>
        <authorList>
            <consortium name="The MGC Project Team"/>
        </authorList>
    </citation>
    <scope>NUCLEOTIDE SEQUENCE [LARGE SCALE MRNA]</scope>
    <source>
        <tissue>Spleen</tissue>
    </source>
</reference>
<feature type="chain" id="PRO_0000284115" description="HSPB1-associated protein 1">
    <location>
        <begin position="1"/>
        <end position="479"/>
    </location>
</feature>
<feature type="domain" description="JmjC" evidence="1">
    <location>
        <begin position="124"/>
        <end position="288"/>
    </location>
</feature>
<feature type="region of interest" description="Disordered" evidence="2">
    <location>
        <begin position="1"/>
        <end position="25"/>
    </location>
</feature>
<feature type="region of interest" description="Interaction with HSPB1" evidence="3">
    <location>
        <begin position="88"/>
        <end position="208"/>
    </location>
</feature>
<feature type="region of interest" description="Disordered" evidence="2">
    <location>
        <begin position="347"/>
        <end position="412"/>
    </location>
</feature>
<feature type="compositionally biased region" description="Basic and acidic residues" evidence="2">
    <location>
        <begin position="356"/>
        <end position="369"/>
    </location>
</feature>
<feature type="sequence conflict" description="In Ref. 1; AAD48846." evidence="4" ref="1">
    <original>D</original>
    <variation>E</variation>
    <location>
        <position position="371"/>
    </location>
</feature>
<dbReference type="EMBL" id="AF168362">
    <property type="protein sequence ID" value="AAD48846.1"/>
    <property type="status" value="ALT_FRAME"/>
    <property type="molecule type" value="mRNA"/>
</dbReference>
<dbReference type="EMBL" id="BC091125">
    <property type="protein sequence ID" value="AAH91125.1"/>
    <property type="molecule type" value="mRNA"/>
</dbReference>
<dbReference type="RefSeq" id="NP_599246.2">
    <property type="nucleotide sequence ID" value="NM_134419.2"/>
</dbReference>
<dbReference type="SMR" id="Q5BKC6"/>
<dbReference type="BioGRID" id="251267">
    <property type="interactions" value="1"/>
</dbReference>
<dbReference type="FunCoup" id="Q5BKC6">
    <property type="interactions" value="2515"/>
</dbReference>
<dbReference type="STRING" id="10116.ENSRNOP00000073471"/>
<dbReference type="GlyGen" id="Q5BKC6">
    <property type="glycosylation" value="1 site"/>
</dbReference>
<dbReference type="iPTMnet" id="Q5BKC6"/>
<dbReference type="PhosphoSitePlus" id="Q5BKC6"/>
<dbReference type="jPOST" id="Q5BKC6"/>
<dbReference type="PaxDb" id="10116-ENSRNOP00000003060"/>
<dbReference type="Ensembl" id="ENSRNOT00000003060.7">
    <property type="protein sequence ID" value="ENSRNOP00000003060.6"/>
    <property type="gene ID" value="ENSRNOG00000002241.8"/>
</dbReference>
<dbReference type="GeneID" id="171460"/>
<dbReference type="KEGG" id="rno:171460"/>
<dbReference type="UCSC" id="RGD:620870">
    <property type="organism name" value="rat"/>
</dbReference>
<dbReference type="AGR" id="RGD:620870"/>
<dbReference type="CTD" id="79663"/>
<dbReference type="RGD" id="620870">
    <property type="gene designation" value="Hspbap1"/>
</dbReference>
<dbReference type="eggNOG" id="KOG2132">
    <property type="taxonomic scope" value="Eukaryota"/>
</dbReference>
<dbReference type="GeneTree" id="ENSGT00940000159893"/>
<dbReference type="HOGENOM" id="CLU_016785_5_2_1"/>
<dbReference type="InParanoid" id="Q5BKC6"/>
<dbReference type="OMA" id="QRMMSKS"/>
<dbReference type="OrthoDB" id="52425at9989"/>
<dbReference type="PhylomeDB" id="Q5BKC6"/>
<dbReference type="TreeFam" id="TF315056"/>
<dbReference type="PRO" id="PR:Q5BKC6"/>
<dbReference type="Proteomes" id="UP000002494">
    <property type="component" value="Chromosome 11"/>
</dbReference>
<dbReference type="Bgee" id="ENSRNOG00000002241">
    <property type="expression patterns" value="Expressed in adult mammalian kidney and 18 other cell types or tissues"/>
</dbReference>
<dbReference type="ExpressionAtlas" id="Q5BKC6">
    <property type="expression patterns" value="baseline and differential"/>
</dbReference>
<dbReference type="GO" id="GO:0005737">
    <property type="term" value="C:cytoplasm"/>
    <property type="evidence" value="ECO:0007669"/>
    <property type="project" value="UniProtKB-SubCell"/>
</dbReference>
<dbReference type="GO" id="GO:0016706">
    <property type="term" value="F:2-oxoglutarate-dependent dioxygenase activity"/>
    <property type="evidence" value="ECO:0000318"/>
    <property type="project" value="GO_Central"/>
</dbReference>
<dbReference type="FunFam" id="2.60.120.650:FF:000018">
    <property type="entry name" value="HSPB1-associated protein 1 homolog"/>
    <property type="match status" value="1"/>
</dbReference>
<dbReference type="FunFam" id="2.60.120.10:FF:000343">
    <property type="entry name" value="HSPB1-associated protein 1 isoform X3"/>
    <property type="match status" value="1"/>
</dbReference>
<dbReference type="Gene3D" id="2.60.120.650">
    <property type="entry name" value="Cupin"/>
    <property type="match status" value="1"/>
</dbReference>
<dbReference type="InterPro" id="IPR041667">
    <property type="entry name" value="Cupin_8"/>
</dbReference>
<dbReference type="InterPro" id="IPR013296">
    <property type="entry name" value="HSPB1-associated_protein_1"/>
</dbReference>
<dbReference type="InterPro" id="IPR003347">
    <property type="entry name" value="JmjC_dom"/>
</dbReference>
<dbReference type="PANTHER" id="PTHR12461:SF43">
    <property type="entry name" value="HSPB1-ASSOCIATED PROTEIN 1"/>
    <property type="match status" value="1"/>
</dbReference>
<dbReference type="PANTHER" id="PTHR12461">
    <property type="entry name" value="HYPOXIA-INDUCIBLE FACTOR 1 ALPHA INHIBITOR-RELATED"/>
    <property type="match status" value="1"/>
</dbReference>
<dbReference type="Pfam" id="PF13621">
    <property type="entry name" value="Cupin_8"/>
    <property type="match status" value="1"/>
</dbReference>
<dbReference type="PRINTS" id="PR01886">
    <property type="entry name" value="PASS1"/>
</dbReference>
<dbReference type="SMART" id="SM00558">
    <property type="entry name" value="JmjC"/>
    <property type="match status" value="1"/>
</dbReference>
<dbReference type="SUPFAM" id="SSF51197">
    <property type="entry name" value="Clavaminate synthase-like"/>
    <property type="match status" value="1"/>
</dbReference>
<dbReference type="PROSITE" id="PS51184">
    <property type="entry name" value="JMJC"/>
    <property type="match status" value="1"/>
</dbReference>
<sequence>MEAGCEGSSPQTLGERTMGEEGERVKPFTPEKAKEVIMSLQQPAIFCNMVFDWPSRHWTAKHLSKVLEGKQIRFRMGLRSTGTVPQFETECSYVDATLEEFLAWNCDQSRISGPFKKYDHSKFWAYADYKYFVTLFEDKTDVFQEVMWSDFGFPGRNGQESTLWIGSLGAHTPCHLDSYGCNLVFQVQGRKRWHLFPPEDTPFLYPTRIPYEESSVFSKINVVNPDLKRFPQFQKARRHMVTLSPGQVLFVPRHWWHYVESLDPVTVSINSWIELEEDHLARVEEAVTRMLVCTLKTAEDPHHPRTWLNPTEVEETSHEVNSCYLNSAVCAFFDHCERAKEVEMQAPRANGEEPGVQEHMEVEQARDPSSDVGAGKQEAASPFGPDLVPVTPASEERGGALEGDSQECTSRNGEHCAELPCARRQQASKGARAEAGQSAPRYPVAPSRVFVSTDDLLDCLVNPQVTRMVAQLLIQGKSL</sequence>
<comment type="function">
    <text evidence="3">May play a role in cellular stress response.</text>
</comment>
<comment type="subunit">
    <text evidence="3">Interacts with CRYAB and HSPB1.</text>
</comment>
<comment type="subcellular location">
    <subcellularLocation>
        <location evidence="3">Cytoplasm</location>
    </subcellularLocation>
</comment>
<comment type="tissue specificity">
    <text evidence="3">Widely expressed. Highly expressed by Sertoli cells in testis (at protein level).</text>
</comment>
<comment type="sequence caution" evidence="4">
    <conflict type="frameshift">
        <sequence resource="EMBL-CDS" id="AAD48846"/>
    </conflict>
</comment>
<name>HBAP1_RAT</name>
<protein>
    <recommendedName>
        <fullName>HSPB1-associated protein 1</fullName>
    </recommendedName>
    <alternativeName>
        <fullName>27 kDa heat shock protein-associated protein 1</fullName>
    </alternativeName>
    <alternativeName>
        <fullName>Protein associated with small stress protein 1</fullName>
    </alternativeName>
</protein>
<proteinExistence type="evidence at protein level"/>